<gene>
    <name evidence="1" type="primary">glmU</name>
    <name type="ordered locus">Exig_0041</name>
</gene>
<proteinExistence type="inferred from homology"/>
<reference key="1">
    <citation type="submission" date="2008-04" db="EMBL/GenBank/DDBJ databases">
        <title>Complete sequence of chromosome of Exiguobacterium sibiricum 255-15.</title>
        <authorList>
            <consortium name="US DOE Joint Genome Institute"/>
            <person name="Copeland A."/>
            <person name="Lucas S."/>
            <person name="Lapidus A."/>
            <person name="Glavina del Rio T."/>
            <person name="Dalin E."/>
            <person name="Tice H."/>
            <person name="Bruce D."/>
            <person name="Goodwin L."/>
            <person name="Pitluck S."/>
            <person name="Kiss H."/>
            <person name="Chertkov O."/>
            <person name="Monk C."/>
            <person name="Brettin T."/>
            <person name="Detter J.C."/>
            <person name="Han C."/>
            <person name="Kuske C.R."/>
            <person name="Schmutz J."/>
            <person name="Larimer F."/>
            <person name="Land M."/>
            <person name="Hauser L."/>
            <person name="Kyrpides N."/>
            <person name="Mikhailova N."/>
            <person name="Vishnivetskaya T."/>
            <person name="Rodrigues D.F."/>
            <person name="Gilichinsky D."/>
            <person name="Tiedje J."/>
            <person name="Richardson P."/>
        </authorList>
    </citation>
    <scope>NUCLEOTIDE SEQUENCE [LARGE SCALE GENOMIC DNA]</scope>
    <source>
        <strain>DSM 17290 / CCUG 55495 / CIP 109462 / JCM 13490 / 255-15</strain>
    </source>
</reference>
<sequence>MNHFAVILAAGKGTRMKSKLYKVLHPVAGKPMVQHVVDQLTTLGVTRQVVIVGHGAESVKEVLGTSVEYALQSEQLGTGHAVQMAEPVLGQEKGSTLVVCGDTPLLTSETLQSLLQHHAETGAKVTVLTAHADDATGYGRIVRGEDGNVSKIVEHKDANAEELLIKEINTGTYVFDNEMLFEALKQVKNDNVQGEYYLPDVIEIAKADGETIAAYAASTFEETIGVNDRVALAQAETSMRKRTNEHWMRQGVTFIDPASTYIGPDVVIGSDTVLYPGTQLLGNTTIGSECIIGPNSDIRNSEVADQAVVRQSVVTDSKIGPAAQVGPFAHLRQQAVLGANTRIGNFVEVKKSTFGEGSKSAHLSYVGDATIGTNVNLGCGSITVNYDGTNKFQTVIEDDAFIGCNVNLIAPVTVGKNALVAAGSTVTDDVPENGLAIARERQTTKPDYR</sequence>
<protein>
    <recommendedName>
        <fullName evidence="1">Bifunctional protein GlmU</fullName>
    </recommendedName>
    <domain>
        <recommendedName>
            <fullName evidence="1">UDP-N-acetylglucosamine pyrophosphorylase</fullName>
            <ecNumber evidence="1">2.7.7.23</ecNumber>
        </recommendedName>
        <alternativeName>
            <fullName evidence="1">N-acetylglucosamine-1-phosphate uridyltransferase</fullName>
        </alternativeName>
    </domain>
    <domain>
        <recommendedName>
            <fullName evidence="1">Glucosamine-1-phosphate N-acetyltransferase</fullName>
            <ecNumber evidence="1">2.3.1.157</ecNumber>
        </recommendedName>
    </domain>
</protein>
<comment type="function">
    <text evidence="1">Catalyzes the last two sequential reactions in the de novo biosynthetic pathway for UDP-N-acetylglucosamine (UDP-GlcNAc). The C-terminal domain catalyzes the transfer of acetyl group from acetyl coenzyme A to glucosamine-1-phosphate (GlcN-1-P) to produce N-acetylglucosamine-1-phosphate (GlcNAc-1-P), which is converted into UDP-GlcNAc by the transfer of uridine 5-monophosphate (from uridine 5-triphosphate), a reaction catalyzed by the N-terminal domain.</text>
</comment>
<comment type="catalytic activity">
    <reaction evidence="1">
        <text>alpha-D-glucosamine 1-phosphate + acetyl-CoA = N-acetyl-alpha-D-glucosamine 1-phosphate + CoA + H(+)</text>
        <dbReference type="Rhea" id="RHEA:13725"/>
        <dbReference type="ChEBI" id="CHEBI:15378"/>
        <dbReference type="ChEBI" id="CHEBI:57287"/>
        <dbReference type="ChEBI" id="CHEBI:57288"/>
        <dbReference type="ChEBI" id="CHEBI:57776"/>
        <dbReference type="ChEBI" id="CHEBI:58516"/>
        <dbReference type="EC" id="2.3.1.157"/>
    </reaction>
</comment>
<comment type="catalytic activity">
    <reaction evidence="1">
        <text>N-acetyl-alpha-D-glucosamine 1-phosphate + UTP + H(+) = UDP-N-acetyl-alpha-D-glucosamine + diphosphate</text>
        <dbReference type="Rhea" id="RHEA:13509"/>
        <dbReference type="ChEBI" id="CHEBI:15378"/>
        <dbReference type="ChEBI" id="CHEBI:33019"/>
        <dbReference type="ChEBI" id="CHEBI:46398"/>
        <dbReference type="ChEBI" id="CHEBI:57705"/>
        <dbReference type="ChEBI" id="CHEBI:57776"/>
        <dbReference type="EC" id="2.7.7.23"/>
    </reaction>
</comment>
<comment type="cofactor">
    <cofactor evidence="1">
        <name>Mg(2+)</name>
        <dbReference type="ChEBI" id="CHEBI:18420"/>
    </cofactor>
    <text evidence="1">Binds 1 Mg(2+) ion per subunit.</text>
</comment>
<comment type="pathway">
    <text evidence="1">Nucleotide-sugar biosynthesis; UDP-N-acetyl-alpha-D-glucosamine biosynthesis; N-acetyl-alpha-D-glucosamine 1-phosphate from alpha-D-glucosamine 6-phosphate (route II): step 2/2.</text>
</comment>
<comment type="pathway">
    <text evidence="1">Nucleotide-sugar biosynthesis; UDP-N-acetyl-alpha-D-glucosamine biosynthesis; UDP-N-acetyl-alpha-D-glucosamine from N-acetyl-alpha-D-glucosamine 1-phosphate: step 1/1.</text>
</comment>
<comment type="pathway">
    <text evidence="1">Bacterial outer membrane biogenesis; LPS lipid A biosynthesis.</text>
</comment>
<comment type="subunit">
    <text evidence="1">Homotrimer.</text>
</comment>
<comment type="subcellular location">
    <subcellularLocation>
        <location evidence="1">Cytoplasm</location>
    </subcellularLocation>
</comment>
<comment type="similarity">
    <text evidence="1">In the N-terminal section; belongs to the N-acetylglucosamine-1-phosphate uridyltransferase family.</text>
</comment>
<comment type="similarity">
    <text evidence="1">In the C-terminal section; belongs to the transferase hexapeptide repeat family.</text>
</comment>
<accession>B1YGP5</accession>
<evidence type="ECO:0000255" key="1">
    <source>
        <dbReference type="HAMAP-Rule" id="MF_01631"/>
    </source>
</evidence>
<keyword id="KW-0012">Acyltransferase</keyword>
<keyword id="KW-0133">Cell shape</keyword>
<keyword id="KW-0961">Cell wall biogenesis/degradation</keyword>
<keyword id="KW-0963">Cytoplasm</keyword>
<keyword id="KW-0460">Magnesium</keyword>
<keyword id="KW-0479">Metal-binding</keyword>
<keyword id="KW-0511">Multifunctional enzyme</keyword>
<keyword id="KW-0548">Nucleotidyltransferase</keyword>
<keyword id="KW-0573">Peptidoglycan synthesis</keyword>
<keyword id="KW-1185">Reference proteome</keyword>
<keyword id="KW-0677">Repeat</keyword>
<keyword id="KW-0808">Transferase</keyword>
<organism>
    <name type="scientific">Exiguobacterium sibiricum (strain DSM 17290 / CCUG 55495 / CIP 109462 / JCM 13490 / 255-15)</name>
    <dbReference type="NCBI Taxonomy" id="262543"/>
    <lineage>
        <taxon>Bacteria</taxon>
        <taxon>Bacillati</taxon>
        <taxon>Bacillota</taxon>
        <taxon>Bacilli</taxon>
        <taxon>Bacillales</taxon>
        <taxon>Bacillales Family XII. Incertae Sedis</taxon>
        <taxon>Exiguobacterium</taxon>
    </lineage>
</organism>
<name>GLMU_EXIS2</name>
<dbReference type="EC" id="2.7.7.23" evidence="1"/>
<dbReference type="EC" id="2.3.1.157" evidence="1"/>
<dbReference type="EMBL" id="CP001022">
    <property type="protein sequence ID" value="ACB59528.1"/>
    <property type="molecule type" value="Genomic_DNA"/>
</dbReference>
<dbReference type="RefSeq" id="WP_012368954.1">
    <property type="nucleotide sequence ID" value="NC_010556.1"/>
</dbReference>
<dbReference type="SMR" id="B1YGP5"/>
<dbReference type="STRING" id="262543.Exig_0041"/>
<dbReference type="KEGG" id="esi:Exig_0041"/>
<dbReference type="eggNOG" id="COG1207">
    <property type="taxonomic scope" value="Bacteria"/>
</dbReference>
<dbReference type="HOGENOM" id="CLU_029499_15_2_9"/>
<dbReference type="OrthoDB" id="9775031at2"/>
<dbReference type="UniPathway" id="UPA00113">
    <property type="reaction ID" value="UER00532"/>
</dbReference>
<dbReference type="UniPathway" id="UPA00113">
    <property type="reaction ID" value="UER00533"/>
</dbReference>
<dbReference type="UniPathway" id="UPA00973"/>
<dbReference type="Proteomes" id="UP000001681">
    <property type="component" value="Chromosome"/>
</dbReference>
<dbReference type="GO" id="GO:0005737">
    <property type="term" value="C:cytoplasm"/>
    <property type="evidence" value="ECO:0007669"/>
    <property type="project" value="UniProtKB-SubCell"/>
</dbReference>
<dbReference type="GO" id="GO:0016020">
    <property type="term" value="C:membrane"/>
    <property type="evidence" value="ECO:0007669"/>
    <property type="project" value="GOC"/>
</dbReference>
<dbReference type="GO" id="GO:0019134">
    <property type="term" value="F:glucosamine-1-phosphate N-acetyltransferase activity"/>
    <property type="evidence" value="ECO:0007669"/>
    <property type="project" value="UniProtKB-UniRule"/>
</dbReference>
<dbReference type="GO" id="GO:0000287">
    <property type="term" value="F:magnesium ion binding"/>
    <property type="evidence" value="ECO:0007669"/>
    <property type="project" value="UniProtKB-UniRule"/>
</dbReference>
<dbReference type="GO" id="GO:0003977">
    <property type="term" value="F:UDP-N-acetylglucosamine diphosphorylase activity"/>
    <property type="evidence" value="ECO:0007669"/>
    <property type="project" value="UniProtKB-UniRule"/>
</dbReference>
<dbReference type="GO" id="GO:0000902">
    <property type="term" value="P:cell morphogenesis"/>
    <property type="evidence" value="ECO:0007669"/>
    <property type="project" value="UniProtKB-UniRule"/>
</dbReference>
<dbReference type="GO" id="GO:0071555">
    <property type="term" value="P:cell wall organization"/>
    <property type="evidence" value="ECO:0007669"/>
    <property type="project" value="UniProtKB-KW"/>
</dbReference>
<dbReference type="GO" id="GO:0009245">
    <property type="term" value="P:lipid A biosynthetic process"/>
    <property type="evidence" value="ECO:0007669"/>
    <property type="project" value="UniProtKB-UniRule"/>
</dbReference>
<dbReference type="GO" id="GO:0009252">
    <property type="term" value="P:peptidoglycan biosynthetic process"/>
    <property type="evidence" value="ECO:0007669"/>
    <property type="project" value="UniProtKB-UniRule"/>
</dbReference>
<dbReference type="GO" id="GO:0008360">
    <property type="term" value="P:regulation of cell shape"/>
    <property type="evidence" value="ECO:0007669"/>
    <property type="project" value="UniProtKB-KW"/>
</dbReference>
<dbReference type="GO" id="GO:0006048">
    <property type="term" value="P:UDP-N-acetylglucosamine biosynthetic process"/>
    <property type="evidence" value="ECO:0007669"/>
    <property type="project" value="UniProtKB-UniPathway"/>
</dbReference>
<dbReference type="CDD" id="cd02540">
    <property type="entry name" value="GT2_GlmU_N_bac"/>
    <property type="match status" value="1"/>
</dbReference>
<dbReference type="CDD" id="cd03353">
    <property type="entry name" value="LbH_GlmU_C"/>
    <property type="match status" value="1"/>
</dbReference>
<dbReference type="Gene3D" id="2.160.10.10">
    <property type="entry name" value="Hexapeptide repeat proteins"/>
    <property type="match status" value="1"/>
</dbReference>
<dbReference type="Gene3D" id="3.90.550.10">
    <property type="entry name" value="Spore Coat Polysaccharide Biosynthesis Protein SpsA, Chain A"/>
    <property type="match status" value="1"/>
</dbReference>
<dbReference type="HAMAP" id="MF_01631">
    <property type="entry name" value="GlmU"/>
    <property type="match status" value="1"/>
</dbReference>
<dbReference type="InterPro" id="IPR005882">
    <property type="entry name" value="Bifunctional_GlmU"/>
</dbReference>
<dbReference type="InterPro" id="IPR050065">
    <property type="entry name" value="GlmU-like"/>
</dbReference>
<dbReference type="InterPro" id="IPR038009">
    <property type="entry name" value="GlmU_C_LbH"/>
</dbReference>
<dbReference type="InterPro" id="IPR001451">
    <property type="entry name" value="Hexapep"/>
</dbReference>
<dbReference type="InterPro" id="IPR018357">
    <property type="entry name" value="Hexapep_transf_CS"/>
</dbReference>
<dbReference type="InterPro" id="IPR005835">
    <property type="entry name" value="NTP_transferase_dom"/>
</dbReference>
<dbReference type="InterPro" id="IPR029044">
    <property type="entry name" value="Nucleotide-diphossugar_trans"/>
</dbReference>
<dbReference type="InterPro" id="IPR011004">
    <property type="entry name" value="Trimer_LpxA-like_sf"/>
</dbReference>
<dbReference type="NCBIfam" id="TIGR01173">
    <property type="entry name" value="glmU"/>
    <property type="match status" value="1"/>
</dbReference>
<dbReference type="NCBIfam" id="NF010934">
    <property type="entry name" value="PRK14354.1"/>
    <property type="match status" value="1"/>
</dbReference>
<dbReference type="PANTHER" id="PTHR43584:SF3">
    <property type="entry name" value="BIFUNCTIONAL PROTEIN GLMU"/>
    <property type="match status" value="1"/>
</dbReference>
<dbReference type="PANTHER" id="PTHR43584">
    <property type="entry name" value="NUCLEOTIDYL TRANSFERASE"/>
    <property type="match status" value="1"/>
</dbReference>
<dbReference type="Pfam" id="PF00132">
    <property type="entry name" value="Hexapep"/>
    <property type="match status" value="3"/>
</dbReference>
<dbReference type="Pfam" id="PF00483">
    <property type="entry name" value="NTP_transferase"/>
    <property type="match status" value="1"/>
</dbReference>
<dbReference type="SUPFAM" id="SSF53448">
    <property type="entry name" value="Nucleotide-diphospho-sugar transferases"/>
    <property type="match status" value="1"/>
</dbReference>
<dbReference type="SUPFAM" id="SSF51161">
    <property type="entry name" value="Trimeric LpxA-like enzymes"/>
    <property type="match status" value="1"/>
</dbReference>
<dbReference type="PROSITE" id="PS00101">
    <property type="entry name" value="HEXAPEP_TRANSFERASES"/>
    <property type="match status" value="1"/>
</dbReference>
<feature type="chain" id="PRO_1000186454" description="Bifunctional protein GlmU">
    <location>
        <begin position="1"/>
        <end position="449"/>
    </location>
</feature>
<feature type="region of interest" description="Pyrophosphorylase" evidence="1">
    <location>
        <begin position="1"/>
        <end position="229"/>
    </location>
</feature>
<feature type="region of interest" description="Linker" evidence="1">
    <location>
        <begin position="230"/>
        <end position="250"/>
    </location>
</feature>
<feature type="region of interest" description="N-acetyltransferase" evidence="1">
    <location>
        <begin position="251"/>
        <end position="449"/>
    </location>
</feature>
<feature type="active site" description="Proton acceptor" evidence="1">
    <location>
        <position position="362"/>
    </location>
</feature>
<feature type="binding site" evidence="1">
    <location>
        <begin position="8"/>
        <end position="11"/>
    </location>
    <ligand>
        <name>UDP-N-acetyl-alpha-D-glucosamine</name>
        <dbReference type="ChEBI" id="CHEBI:57705"/>
    </ligand>
</feature>
<feature type="binding site" evidence="1">
    <location>
        <position position="22"/>
    </location>
    <ligand>
        <name>UDP-N-acetyl-alpha-D-glucosamine</name>
        <dbReference type="ChEBI" id="CHEBI:57705"/>
    </ligand>
</feature>
<feature type="binding site" evidence="1">
    <location>
        <position position="72"/>
    </location>
    <ligand>
        <name>UDP-N-acetyl-alpha-D-glucosamine</name>
        <dbReference type="ChEBI" id="CHEBI:57705"/>
    </ligand>
</feature>
<feature type="binding site" evidence="1">
    <location>
        <begin position="77"/>
        <end position="78"/>
    </location>
    <ligand>
        <name>UDP-N-acetyl-alpha-D-glucosamine</name>
        <dbReference type="ChEBI" id="CHEBI:57705"/>
    </ligand>
</feature>
<feature type="binding site" evidence="1">
    <location>
        <position position="102"/>
    </location>
    <ligand>
        <name>Mg(2+)</name>
        <dbReference type="ChEBI" id="CHEBI:18420"/>
    </ligand>
</feature>
<feature type="binding site" evidence="1">
    <location>
        <position position="139"/>
    </location>
    <ligand>
        <name>UDP-N-acetyl-alpha-D-glucosamine</name>
        <dbReference type="ChEBI" id="CHEBI:57705"/>
    </ligand>
</feature>
<feature type="binding site" evidence="1">
    <location>
        <position position="154"/>
    </location>
    <ligand>
        <name>UDP-N-acetyl-alpha-D-glucosamine</name>
        <dbReference type="ChEBI" id="CHEBI:57705"/>
    </ligand>
</feature>
<feature type="binding site" evidence="1">
    <location>
        <position position="169"/>
    </location>
    <ligand>
        <name>UDP-N-acetyl-alpha-D-glucosamine</name>
        <dbReference type="ChEBI" id="CHEBI:57705"/>
    </ligand>
</feature>
<feature type="binding site" evidence="1">
    <location>
        <position position="227"/>
    </location>
    <ligand>
        <name>Mg(2+)</name>
        <dbReference type="ChEBI" id="CHEBI:18420"/>
    </ligand>
</feature>
<feature type="binding site" evidence="1">
    <location>
        <position position="227"/>
    </location>
    <ligand>
        <name>UDP-N-acetyl-alpha-D-glucosamine</name>
        <dbReference type="ChEBI" id="CHEBI:57705"/>
    </ligand>
</feature>
<feature type="binding site" evidence="1">
    <location>
        <position position="332"/>
    </location>
    <ligand>
        <name>UDP-N-acetyl-alpha-D-glucosamine</name>
        <dbReference type="ChEBI" id="CHEBI:57705"/>
    </ligand>
</feature>
<feature type="binding site" evidence="1">
    <location>
        <position position="350"/>
    </location>
    <ligand>
        <name>UDP-N-acetyl-alpha-D-glucosamine</name>
        <dbReference type="ChEBI" id="CHEBI:57705"/>
    </ligand>
</feature>
<feature type="binding site" evidence="1">
    <location>
        <position position="365"/>
    </location>
    <ligand>
        <name>UDP-N-acetyl-alpha-D-glucosamine</name>
        <dbReference type="ChEBI" id="CHEBI:57705"/>
    </ligand>
</feature>
<feature type="binding site" evidence="1">
    <location>
        <position position="376"/>
    </location>
    <ligand>
        <name>UDP-N-acetyl-alpha-D-glucosamine</name>
        <dbReference type="ChEBI" id="CHEBI:57705"/>
    </ligand>
</feature>
<feature type="binding site" evidence="1">
    <location>
        <begin position="385"/>
        <end position="386"/>
    </location>
    <ligand>
        <name>acetyl-CoA</name>
        <dbReference type="ChEBI" id="CHEBI:57288"/>
    </ligand>
</feature>
<feature type="binding site" evidence="1">
    <location>
        <position position="422"/>
    </location>
    <ligand>
        <name>acetyl-CoA</name>
        <dbReference type="ChEBI" id="CHEBI:57288"/>
    </ligand>
</feature>
<feature type="binding site" evidence="1">
    <location>
        <position position="439"/>
    </location>
    <ligand>
        <name>acetyl-CoA</name>
        <dbReference type="ChEBI" id="CHEBI:57288"/>
    </ligand>
</feature>